<gene>
    <name evidence="1" type="primary">rpoC</name>
    <name type="ordered locus">HSM_0554</name>
</gene>
<reference key="1">
    <citation type="submission" date="2008-02" db="EMBL/GenBank/DDBJ databases">
        <title>Complete sequence of Haemophilus somnus 2336.</title>
        <authorList>
            <consortium name="US DOE Joint Genome Institute"/>
            <person name="Siddaramappa S."/>
            <person name="Duncan A.J."/>
            <person name="Challacombe J.F."/>
            <person name="Rainey D."/>
            <person name="Gillaspy A.F."/>
            <person name="Carson M."/>
            <person name="Gipson J."/>
            <person name="Gipson M."/>
            <person name="Bruce D."/>
            <person name="Detter J.C."/>
            <person name="Han C.S."/>
            <person name="Land M."/>
            <person name="Tapia R."/>
            <person name="Thompson L.S."/>
            <person name="Orvis J."/>
            <person name="Zaitshik J."/>
            <person name="Barnes G."/>
            <person name="Brettin T.S."/>
            <person name="Dyer D.W."/>
            <person name="Inzana T.J."/>
        </authorList>
    </citation>
    <scope>NUCLEOTIDE SEQUENCE [LARGE SCALE GENOMIC DNA]</scope>
    <source>
        <strain>2336</strain>
    </source>
</reference>
<proteinExistence type="inferred from homology"/>
<protein>
    <recommendedName>
        <fullName evidence="1">DNA-directed RNA polymerase subunit beta'</fullName>
        <shortName evidence="1">RNAP subunit beta'</shortName>
        <ecNumber evidence="1">2.7.7.6</ecNumber>
    </recommendedName>
    <alternativeName>
        <fullName evidence="1">RNA polymerase subunit beta'</fullName>
    </alternativeName>
    <alternativeName>
        <fullName evidence="1">Transcriptase subunit beta'</fullName>
    </alternativeName>
</protein>
<dbReference type="EC" id="2.7.7.6" evidence="1"/>
<dbReference type="EMBL" id="CP000947">
    <property type="protein sequence ID" value="ACA32205.1"/>
    <property type="molecule type" value="Genomic_DNA"/>
</dbReference>
<dbReference type="RefSeq" id="WP_012341387.1">
    <property type="nucleotide sequence ID" value="NC_010519.1"/>
</dbReference>
<dbReference type="SMR" id="B0URZ7"/>
<dbReference type="STRING" id="228400.HSM_0554"/>
<dbReference type="GeneID" id="31486836"/>
<dbReference type="KEGG" id="hsm:HSM_0554"/>
<dbReference type="HOGENOM" id="CLU_000524_3_1_6"/>
<dbReference type="GO" id="GO:0000428">
    <property type="term" value="C:DNA-directed RNA polymerase complex"/>
    <property type="evidence" value="ECO:0007669"/>
    <property type="project" value="UniProtKB-KW"/>
</dbReference>
<dbReference type="GO" id="GO:0003677">
    <property type="term" value="F:DNA binding"/>
    <property type="evidence" value="ECO:0007669"/>
    <property type="project" value="UniProtKB-UniRule"/>
</dbReference>
<dbReference type="GO" id="GO:0003899">
    <property type="term" value="F:DNA-directed RNA polymerase activity"/>
    <property type="evidence" value="ECO:0007669"/>
    <property type="project" value="UniProtKB-UniRule"/>
</dbReference>
<dbReference type="GO" id="GO:0000287">
    <property type="term" value="F:magnesium ion binding"/>
    <property type="evidence" value="ECO:0007669"/>
    <property type="project" value="UniProtKB-UniRule"/>
</dbReference>
<dbReference type="GO" id="GO:0008270">
    <property type="term" value="F:zinc ion binding"/>
    <property type="evidence" value="ECO:0007669"/>
    <property type="project" value="UniProtKB-UniRule"/>
</dbReference>
<dbReference type="GO" id="GO:0006351">
    <property type="term" value="P:DNA-templated transcription"/>
    <property type="evidence" value="ECO:0007669"/>
    <property type="project" value="UniProtKB-UniRule"/>
</dbReference>
<dbReference type="CDD" id="cd02655">
    <property type="entry name" value="RNAP_beta'_C"/>
    <property type="match status" value="1"/>
</dbReference>
<dbReference type="CDD" id="cd01609">
    <property type="entry name" value="RNAP_beta'_N"/>
    <property type="match status" value="1"/>
</dbReference>
<dbReference type="FunFam" id="1.10.132.30:FF:000003">
    <property type="entry name" value="DNA-directed RNA polymerase subunit beta"/>
    <property type="match status" value="1"/>
</dbReference>
<dbReference type="FunFam" id="1.10.150.390:FF:000002">
    <property type="entry name" value="DNA-directed RNA polymerase subunit beta"/>
    <property type="match status" value="1"/>
</dbReference>
<dbReference type="FunFam" id="4.10.860.120:FF:000001">
    <property type="entry name" value="DNA-directed RNA polymerase subunit beta"/>
    <property type="match status" value="1"/>
</dbReference>
<dbReference type="Gene3D" id="1.10.132.30">
    <property type="match status" value="1"/>
</dbReference>
<dbReference type="Gene3D" id="1.10.150.390">
    <property type="match status" value="1"/>
</dbReference>
<dbReference type="Gene3D" id="1.10.1790.20">
    <property type="match status" value="1"/>
</dbReference>
<dbReference type="Gene3D" id="1.10.40.90">
    <property type="match status" value="1"/>
</dbReference>
<dbReference type="Gene3D" id="2.40.40.20">
    <property type="match status" value="1"/>
</dbReference>
<dbReference type="Gene3D" id="2.40.50.100">
    <property type="match status" value="3"/>
</dbReference>
<dbReference type="Gene3D" id="4.10.860.120">
    <property type="entry name" value="RNA polymerase II, clamp domain"/>
    <property type="match status" value="1"/>
</dbReference>
<dbReference type="Gene3D" id="1.10.274.100">
    <property type="entry name" value="RNA polymerase Rpb1, domain 3"/>
    <property type="match status" value="1"/>
</dbReference>
<dbReference type="HAMAP" id="MF_01322">
    <property type="entry name" value="RNApol_bact_RpoC"/>
    <property type="match status" value="1"/>
</dbReference>
<dbReference type="InterPro" id="IPR045867">
    <property type="entry name" value="DNA-dir_RpoC_beta_prime"/>
</dbReference>
<dbReference type="InterPro" id="IPR012754">
    <property type="entry name" value="DNA-dir_RpoC_beta_prime_bact"/>
</dbReference>
<dbReference type="InterPro" id="IPR000722">
    <property type="entry name" value="RNA_pol_asu"/>
</dbReference>
<dbReference type="InterPro" id="IPR006592">
    <property type="entry name" value="RNA_pol_N"/>
</dbReference>
<dbReference type="InterPro" id="IPR007080">
    <property type="entry name" value="RNA_pol_Rpb1_1"/>
</dbReference>
<dbReference type="InterPro" id="IPR007066">
    <property type="entry name" value="RNA_pol_Rpb1_3"/>
</dbReference>
<dbReference type="InterPro" id="IPR042102">
    <property type="entry name" value="RNA_pol_Rpb1_3_sf"/>
</dbReference>
<dbReference type="InterPro" id="IPR007083">
    <property type="entry name" value="RNA_pol_Rpb1_4"/>
</dbReference>
<dbReference type="InterPro" id="IPR007081">
    <property type="entry name" value="RNA_pol_Rpb1_5"/>
</dbReference>
<dbReference type="InterPro" id="IPR044893">
    <property type="entry name" value="RNA_pol_Rpb1_clamp_domain"/>
</dbReference>
<dbReference type="InterPro" id="IPR038120">
    <property type="entry name" value="Rpb1_funnel_sf"/>
</dbReference>
<dbReference type="NCBIfam" id="TIGR02386">
    <property type="entry name" value="rpoC_TIGR"/>
    <property type="match status" value="1"/>
</dbReference>
<dbReference type="PANTHER" id="PTHR19376">
    <property type="entry name" value="DNA-DIRECTED RNA POLYMERASE"/>
    <property type="match status" value="1"/>
</dbReference>
<dbReference type="PANTHER" id="PTHR19376:SF54">
    <property type="entry name" value="DNA-DIRECTED RNA POLYMERASE SUBUNIT BETA"/>
    <property type="match status" value="1"/>
</dbReference>
<dbReference type="Pfam" id="PF04997">
    <property type="entry name" value="RNA_pol_Rpb1_1"/>
    <property type="match status" value="1"/>
</dbReference>
<dbReference type="Pfam" id="PF00623">
    <property type="entry name" value="RNA_pol_Rpb1_2"/>
    <property type="match status" value="1"/>
</dbReference>
<dbReference type="Pfam" id="PF04983">
    <property type="entry name" value="RNA_pol_Rpb1_3"/>
    <property type="match status" value="1"/>
</dbReference>
<dbReference type="Pfam" id="PF05000">
    <property type="entry name" value="RNA_pol_Rpb1_4"/>
    <property type="match status" value="1"/>
</dbReference>
<dbReference type="Pfam" id="PF04998">
    <property type="entry name" value="RNA_pol_Rpb1_5"/>
    <property type="match status" value="1"/>
</dbReference>
<dbReference type="SMART" id="SM00663">
    <property type="entry name" value="RPOLA_N"/>
    <property type="match status" value="1"/>
</dbReference>
<dbReference type="SUPFAM" id="SSF64484">
    <property type="entry name" value="beta and beta-prime subunits of DNA dependent RNA-polymerase"/>
    <property type="match status" value="1"/>
</dbReference>
<name>RPOC_HISS2</name>
<organism>
    <name type="scientific">Histophilus somni (strain 2336)</name>
    <name type="common">Haemophilus somnus</name>
    <dbReference type="NCBI Taxonomy" id="228400"/>
    <lineage>
        <taxon>Bacteria</taxon>
        <taxon>Pseudomonadati</taxon>
        <taxon>Pseudomonadota</taxon>
        <taxon>Gammaproteobacteria</taxon>
        <taxon>Pasteurellales</taxon>
        <taxon>Pasteurellaceae</taxon>
        <taxon>Histophilus</taxon>
    </lineage>
</organism>
<feature type="chain" id="PRO_0000353380" description="DNA-directed RNA polymerase subunit beta'">
    <location>
        <begin position="1"/>
        <end position="1420"/>
    </location>
</feature>
<feature type="binding site" evidence="1">
    <location>
        <position position="71"/>
    </location>
    <ligand>
        <name>Zn(2+)</name>
        <dbReference type="ChEBI" id="CHEBI:29105"/>
        <label>1</label>
    </ligand>
</feature>
<feature type="binding site" evidence="1">
    <location>
        <position position="73"/>
    </location>
    <ligand>
        <name>Zn(2+)</name>
        <dbReference type="ChEBI" id="CHEBI:29105"/>
        <label>1</label>
    </ligand>
</feature>
<feature type="binding site" evidence="1">
    <location>
        <position position="86"/>
    </location>
    <ligand>
        <name>Zn(2+)</name>
        <dbReference type="ChEBI" id="CHEBI:29105"/>
        <label>1</label>
    </ligand>
</feature>
<feature type="binding site" evidence="1">
    <location>
        <position position="89"/>
    </location>
    <ligand>
        <name>Zn(2+)</name>
        <dbReference type="ChEBI" id="CHEBI:29105"/>
        <label>1</label>
    </ligand>
</feature>
<feature type="binding site" evidence="1">
    <location>
        <position position="461"/>
    </location>
    <ligand>
        <name>Mg(2+)</name>
        <dbReference type="ChEBI" id="CHEBI:18420"/>
    </ligand>
</feature>
<feature type="binding site" evidence="1">
    <location>
        <position position="463"/>
    </location>
    <ligand>
        <name>Mg(2+)</name>
        <dbReference type="ChEBI" id="CHEBI:18420"/>
    </ligand>
</feature>
<feature type="binding site" evidence="1">
    <location>
        <position position="465"/>
    </location>
    <ligand>
        <name>Mg(2+)</name>
        <dbReference type="ChEBI" id="CHEBI:18420"/>
    </ligand>
</feature>
<feature type="binding site" evidence="1">
    <location>
        <position position="815"/>
    </location>
    <ligand>
        <name>Zn(2+)</name>
        <dbReference type="ChEBI" id="CHEBI:29105"/>
        <label>2</label>
    </ligand>
</feature>
<feature type="binding site" evidence="1">
    <location>
        <position position="889"/>
    </location>
    <ligand>
        <name>Zn(2+)</name>
        <dbReference type="ChEBI" id="CHEBI:29105"/>
        <label>2</label>
    </ligand>
</feature>
<feature type="binding site" evidence="1">
    <location>
        <position position="896"/>
    </location>
    <ligand>
        <name>Zn(2+)</name>
        <dbReference type="ChEBI" id="CHEBI:29105"/>
        <label>2</label>
    </ligand>
</feature>
<feature type="binding site" evidence="1">
    <location>
        <position position="899"/>
    </location>
    <ligand>
        <name>Zn(2+)</name>
        <dbReference type="ChEBI" id="CHEBI:29105"/>
        <label>2</label>
    </ligand>
</feature>
<sequence>MKDLVKFLKAQSKTSEDFDVIKIGLASPDMIRSWSYGEVKKPETINYRTFKPERDGLFCARIFGPVKDYECLCGKYKRLKHRGVICEKCGVEVTQAKVRRERMGHIELASPVAHIWFLKSLPSRIGLLLDMPLRDIERVLYFESYIVIEPGMTDLERGQLLTEEQFLDAEDRWQDEFDAKMGAEAIQALLRDMDLEVECETLREELQSTNSETKRKKITKRLKLLESFIQSGNKPEWMVMTVLPVLPPDLRPLVPLDGGRFATSDLNDLYRRVINRNNRLKRLLDLIAPDIIVRNEKRMLQESVDALLDNGRRGRAITGSNRRPLKSLADMIKGKQGRFRQNLLGKRVDYSGRSVITVGPYLHLHQCGLPKKMALELFRPFIYAKLESRGFATTIKAAKKMVEREDAIVWDILADVIREHPILLNRAPTLHRLGIQAFEPILIEGKAIQLHPLVCAAFNADFDGDQMAVHVPLTLEAQLEARALMMSTNNILSPANGEPIIVPSQDVVLGLYYMTRDKVNGKGEGMLLQDSREAEKAYRTGQAELHSRVKVRITEYVKNAIGEFEPQTHLVDTTIGRAILWMIAPKGMPFSLFNQTLGKKAISKLINESYRRLGLKESVLFADHIMYTGFAYAARSGSSVGIDDMVIPQKKYEIISAAEEEVAEIQEQFQSGLVTAGERYNKVIDIWAAANERVAKAMMENLSQEEVINREGQPEKQASFNSIFMMADSGARGSAAQIRQLAGMRGLMARPDGSIIETPITANFREGLNVLQYFISTHGARKGLADTALKTANSGYLTRRLVDVAQDLVIIEDDCGTHEGIVMTPLIEGGDVKEALRDRVLGRVAAEDILKPGTNEVLISRNTLLDEKLCDVIDENSVDSIKVRSVVTCDTDFGVCAKCYGRDLARGHLINQGEAVGVIAAQSIGEPGTQLTMRTFHIGGAASAAAKESSVQVKNTGTLRLTNVKFVTNKEGKLVLTSRNTELTIIDTFGRTKEHYKVPYGAVLNHADGEEVTAGETVANWDPHTMPVISEVSGFVKFVEIVDGLTVTRQTDELTGLSSIVVQDVGERATAGKDLRPALKLVDAQGNDIFIPGTDVMAQYFLPGKAIVSLDDGAEVFVGEPLARIPQESVGTKDITGGLPRVADLFEARKPKEPAILAEISGIVSFGKETKGKRRLLITPMEGETYEEMIPKWRQLNVFEGELVQRGDLISDGAETPHDILRLRGVHAVTDYIVNEVQEVYRLQGVKINDKHIEVIVRQMLRKAIITNAYDSEFLEGEQVEVARVKIVNRKRAEEGKPLVEFERELLGITKASLATESFISAASFQETTRVLTEAAVAGKRDELRGLKENVIVGRLIPAGTGFAYHQNRQKNRLVGGMENTTEVKLSAVDEEEIASEFTFSAEDATANLAEMLNMADDAE</sequence>
<evidence type="ECO:0000255" key="1">
    <source>
        <dbReference type="HAMAP-Rule" id="MF_01322"/>
    </source>
</evidence>
<keyword id="KW-0240">DNA-directed RNA polymerase</keyword>
<keyword id="KW-0460">Magnesium</keyword>
<keyword id="KW-0479">Metal-binding</keyword>
<keyword id="KW-0548">Nucleotidyltransferase</keyword>
<keyword id="KW-0804">Transcription</keyword>
<keyword id="KW-0808">Transferase</keyword>
<keyword id="KW-0862">Zinc</keyword>
<comment type="function">
    <text evidence="1">DNA-dependent RNA polymerase catalyzes the transcription of DNA into RNA using the four ribonucleoside triphosphates as substrates.</text>
</comment>
<comment type="catalytic activity">
    <reaction evidence="1">
        <text>RNA(n) + a ribonucleoside 5'-triphosphate = RNA(n+1) + diphosphate</text>
        <dbReference type="Rhea" id="RHEA:21248"/>
        <dbReference type="Rhea" id="RHEA-COMP:14527"/>
        <dbReference type="Rhea" id="RHEA-COMP:17342"/>
        <dbReference type="ChEBI" id="CHEBI:33019"/>
        <dbReference type="ChEBI" id="CHEBI:61557"/>
        <dbReference type="ChEBI" id="CHEBI:140395"/>
        <dbReference type="EC" id="2.7.7.6"/>
    </reaction>
</comment>
<comment type="cofactor">
    <cofactor evidence="1">
        <name>Mg(2+)</name>
        <dbReference type="ChEBI" id="CHEBI:18420"/>
    </cofactor>
    <text evidence="1">Binds 1 Mg(2+) ion per subunit.</text>
</comment>
<comment type="cofactor">
    <cofactor evidence="1">
        <name>Zn(2+)</name>
        <dbReference type="ChEBI" id="CHEBI:29105"/>
    </cofactor>
    <text evidence="1">Binds 2 Zn(2+) ions per subunit.</text>
</comment>
<comment type="subunit">
    <text evidence="1">The RNAP catalytic core consists of 2 alpha, 1 beta, 1 beta' and 1 omega subunit. When a sigma factor is associated with the core the holoenzyme is formed, which can initiate transcription.</text>
</comment>
<comment type="similarity">
    <text evidence="1">Belongs to the RNA polymerase beta' chain family.</text>
</comment>
<accession>B0URZ7</accession>